<feature type="chain" id="PRO_0000231239" description="UDP-N-acetylglucosamine 1-carboxyvinyltransferase">
    <location>
        <begin position="1"/>
        <end position="434"/>
    </location>
</feature>
<feature type="active site" description="Proton donor" evidence="1">
    <location>
        <position position="121"/>
    </location>
</feature>
<feature type="binding site" evidence="1">
    <location>
        <begin position="22"/>
        <end position="23"/>
    </location>
    <ligand>
        <name>phosphoenolpyruvate</name>
        <dbReference type="ChEBI" id="CHEBI:58702"/>
    </ligand>
</feature>
<feature type="binding site" evidence="1">
    <location>
        <position position="97"/>
    </location>
    <ligand>
        <name>UDP-N-acetyl-alpha-D-glucosamine</name>
        <dbReference type="ChEBI" id="CHEBI:57705"/>
    </ligand>
</feature>
<feature type="binding site" evidence="1">
    <location>
        <position position="319"/>
    </location>
    <ligand>
        <name>UDP-N-acetyl-alpha-D-glucosamine</name>
        <dbReference type="ChEBI" id="CHEBI:57705"/>
    </ligand>
</feature>
<feature type="binding site" evidence="1">
    <location>
        <position position="341"/>
    </location>
    <ligand>
        <name>UDP-N-acetyl-alpha-D-glucosamine</name>
        <dbReference type="ChEBI" id="CHEBI:57705"/>
    </ligand>
</feature>
<accession>Q7MUW1</accession>
<organism>
    <name type="scientific">Porphyromonas gingivalis (strain ATCC BAA-308 / W83)</name>
    <dbReference type="NCBI Taxonomy" id="242619"/>
    <lineage>
        <taxon>Bacteria</taxon>
        <taxon>Pseudomonadati</taxon>
        <taxon>Bacteroidota</taxon>
        <taxon>Bacteroidia</taxon>
        <taxon>Bacteroidales</taxon>
        <taxon>Porphyromonadaceae</taxon>
        <taxon>Porphyromonas</taxon>
    </lineage>
</organism>
<keyword id="KW-0131">Cell cycle</keyword>
<keyword id="KW-0132">Cell division</keyword>
<keyword id="KW-0133">Cell shape</keyword>
<keyword id="KW-0961">Cell wall biogenesis/degradation</keyword>
<keyword id="KW-0963">Cytoplasm</keyword>
<keyword id="KW-0573">Peptidoglycan synthesis</keyword>
<keyword id="KW-1185">Reference proteome</keyword>
<keyword id="KW-0808">Transferase</keyword>
<evidence type="ECO:0000255" key="1">
    <source>
        <dbReference type="HAMAP-Rule" id="MF_00111"/>
    </source>
</evidence>
<gene>
    <name evidence="1" type="primary">murA</name>
    <name type="ordered locus">PG_1366</name>
</gene>
<reference key="1">
    <citation type="journal article" date="2003" name="J. Bacteriol.">
        <title>Complete genome sequence of the oral pathogenic bacterium Porphyromonas gingivalis strain W83.</title>
        <authorList>
            <person name="Nelson K.E."/>
            <person name="Fleischmann R.D."/>
            <person name="DeBoy R.T."/>
            <person name="Paulsen I.T."/>
            <person name="Fouts D.E."/>
            <person name="Eisen J.A."/>
            <person name="Daugherty S.C."/>
            <person name="Dodson R.J."/>
            <person name="Durkin A.S."/>
            <person name="Gwinn M.L."/>
            <person name="Haft D.H."/>
            <person name="Kolonay J.F."/>
            <person name="Nelson W.C."/>
            <person name="Mason T.M."/>
            <person name="Tallon L."/>
            <person name="Gray J."/>
            <person name="Granger D."/>
            <person name="Tettelin H."/>
            <person name="Dong H."/>
            <person name="Galvin J.L."/>
            <person name="Duncan M.J."/>
            <person name="Dewhirst F.E."/>
            <person name="Fraser C.M."/>
        </authorList>
    </citation>
    <scope>NUCLEOTIDE SEQUENCE [LARGE SCALE GENOMIC DNA]</scope>
    <source>
        <strain>ATCC BAA-308 / W83</strain>
    </source>
</reference>
<dbReference type="EC" id="2.5.1.7" evidence="1"/>
<dbReference type="EMBL" id="AE015924">
    <property type="protein sequence ID" value="AAQ66430.1"/>
    <property type="molecule type" value="Genomic_DNA"/>
</dbReference>
<dbReference type="RefSeq" id="WP_005874334.1">
    <property type="nucleotide sequence ID" value="NC_002950.2"/>
</dbReference>
<dbReference type="SMR" id="Q7MUW1"/>
<dbReference type="STRING" id="242619.PG_1366"/>
<dbReference type="EnsemblBacteria" id="AAQ66430">
    <property type="protein sequence ID" value="AAQ66430"/>
    <property type="gene ID" value="PG_1366"/>
</dbReference>
<dbReference type="KEGG" id="pgi:PG_1366"/>
<dbReference type="eggNOG" id="COG0766">
    <property type="taxonomic scope" value="Bacteria"/>
</dbReference>
<dbReference type="HOGENOM" id="CLU_027387_0_1_10"/>
<dbReference type="UniPathway" id="UPA00219"/>
<dbReference type="Proteomes" id="UP000000588">
    <property type="component" value="Chromosome"/>
</dbReference>
<dbReference type="GO" id="GO:0005737">
    <property type="term" value="C:cytoplasm"/>
    <property type="evidence" value="ECO:0007669"/>
    <property type="project" value="UniProtKB-SubCell"/>
</dbReference>
<dbReference type="GO" id="GO:0008760">
    <property type="term" value="F:UDP-N-acetylglucosamine 1-carboxyvinyltransferase activity"/>
    <property type="evidence" value="ECO:0007669"/>
    <property type="project" value="UniProtKB-UniRule"/>
</dbReference>
<dbReference type="GO" id="GO:0051301">
    <property type="term" value="P:cell division"/>
    <property type="evidence" value="ECO:0007669"/>
    <property type="project" value="UniProtKB-KW"/>
</dbReference>
<dbReference type="GO" id="GO:0071555">
    <property type="term" value="P:cell wall organization"/>
    <property type="evidence" value="ECO:0007669"/>
    <property type="project" value="UniProtKB-KW"/>
</dbReference>
<dbReference type="GO" id="GO:0009252">
    <property type="term" value="P:peptidoglycan biosynthetic process"/>
    <property type="evidence" value="ECO:0007669"/>
    <property type="project" value="UniProtKB-UniRule"/>
</dbReference>
<dbReference type="GO" id="GO:0008360">
    <property type="term" value="P:regulation of cell shape"/>
    <property type="evidence" value="ECO:0007669"/>
    <property type="project" value="UniProtKB-KW"/>
</dbReference>
<dbReference type="GO" id="GO:0019277">
    <property type="term" value="P:UDP-N-acetylgalactosamine biosynthetic process"/>
    <property type="evidence" value="ECO:0007669"/>
    <property type="project" value="InterPro"/>
</dbReference>
<dbReference type="CDD" id="cd01555">
    <property type="entry name" value="UdpNAET"/>
    <property type="match status" value="1"/>
</dbReference>
<dbReference type="Gene3D" id="3.65.10.10">
    <property type="entry name" value="Enolpyruvate transferase domain"/>
    <property type="match status" value="2"/>
</dbReference>
<dbReference type="HAMAP" id="MF_00111">
    <property type="entry name" value="MurA"/>
    <property type="match status" value="1"/>
</dbReference>
<dbReference type="InterPro" id="IPR001986">
    <property type="entry name" value="Enolpyruvate_Tfrase_dom"/>
</dbReference>
<dbReference type="InterPro" id="IPR036968">
    <property type="entry name" value="Enolpyruvate_Tfrase_sf"/>
</dbReference>
<dbReference type="InterPro" id="IPR050068">
    <property type="entry name" value="MurA_subfamily"/>
</dbReference>
<dbReference type="InterPro" id="IPR013792">
    <property type="entry name" value="RNA3'P_cycl/enolpyr_Trfase_a/b"/>
</dbReference>
<dbReference type="InterPro" id="IPR005750">
    <property type="entry name" value="UDP_GlcNAc_COvinyl_MurA"/>
</dbReference>
<dbReference type="NCBIfam" id="TIGR01072">
    <property type="entry name" value="murA"/>
    <property type="match status" value="1"/>
</dbReference>
<dbReference type="NCBIfam" id="NF006873">
    <property type="entry name" value="PRK09369.1"/>
    <property type="match status" value="1"/>
</dbReference>
<dbReference type="PANTHER" id="PTHR43783">
    <property type="entry name" value="UDP-N-ACETYLGLUCOSAMINE 1-CARBOXYVINYLTRANSFERASE"/>
    <property type="match status" value="1"/>
</dbReference>
<dbReference type="PANTHER" id="PTHR43783:SF1">
    <property type="entry name" value="UDP-N-ACETYLGLUCOSAMINE 1-CARBOXYVINYLTRANSFERASE"/>
    <property type="match status" value="1"/>
</dbReference>
<dbReference type="Pfam" id="PF00275">
    <property type="entry name" value="EPSP_synthase"/>
    <property type="match status" value="1"/>
</dbReference>
<dbReference type="SUPFAM" id="SSF55205">
    <property type="entry name" value="EPT/RTPC-like"/>
    <property type="match status" value="1"/>
</dbReference>
<proteinExistence type="inferred from homology"/>
<protein>
    <recommendedName>
        <fullName evidence="1">UDP-N-acetylglucosamine 1-carboxyvinyltransferase</fullName>
        <ecNumber evidence="1">2.5.1.7</ecNumber>
    </recommendedName>
    <alternativeName>
        <fullName evidence="1">Enoylpyruvate transferase</fullName>
    </alternativeName>
    <alternativeName>
        <fullName evidence="1">UDP-N-acetylglucosamine enolpyruvyl transferase</fullName>
        <shortName evidence="1">EPT</shortName>
    </alternativeName>
</protein>
<sequence>MASYVIEGGNSLKGEILVQGAKNEALQIISATLLTDQEVVVRNIPDILDVNNLIDLLRNMGVKVKRPTRDTCVFQADNVNLDYIKSEQFLEKSRALRGSVLLVGPLISRFGYAIFPKPGGDKIGRRRLDTHLVGIQALGATCDYHSDMQAYELTASRLSGTYMLLDEASVTGTANILMAAVLADGITTIYNAACEPYLQQLCKMLLSMGAHIEGVGSNLLRIEGVQSLHGCEHKMLPDMIEVGSFIGMAAMTASELLIKDVSVPDLGIIPASFRRLGIAVEQQGDDLFIPKQEHYEIETFMDGSIMTIADAPWPGLTPDLLSVFLVVATQAKGSVLIHQKMFESRLFFVDKLIDMGAQIILCDPHRATIIGLDKRVPLRAATMVSPDIRAGIALLIAAMSAEGTSIIHNVEQIDRGYQSIDTRLNAIGARISRL</sequence>
<name>MURA_PORGI</name>
<comment type="function">
    <text evidence="1">Cell wall formation. Adds enolpyruvyl to UDP-N-acetylglucosamine.</text>
</comment>
<comment type="catalytic activity">
    <reaction evidence="1">
        <text>phosphoenolpyruvate + UDP-N-acetyl-alpha-D-glucosamine = UDP-N-acetyl-3-O-(1-carboxyvinyl)-alpha-D-glucosamine + phosphate</text>
        <dbReference type="Rhea" id="RHEA:18681"/>
        <dbReference type="ChEBI" id="CHEBI:43474"/>
        <dbReference type="ChEBI" id="CHEBI:57705"/>
        <dbReference type="ChEBI" id="CHEBI:58702"/>
        <dbReference type="ChEBI" id="CHEBI:68483"/>
        <dbReference type="EC" id="2.5.1.7"/>
    </reaction>
</comment>
<comment type="pathway">
    <text evidence="1">Cell wall biogenesis; peptidoglycan biosynthesis.</text>
</comment>
<comment type="subcellular location">
    <subcellularLocation>
        <location evidence="1">Cytoplasm</location>
    </subcellularLocation>
</comment>
<comment type="similarity">
    <text evidence="1">Belongs to the EPSP synthase family. MurA subfamily.</text>
</comment>